<organism>
    <name type="scientific">Streptococcus pyogenes serotype M3 (strain SSI-1)</name>
    <dbReference type="NCBI Taxonomy" id="193567"/>
    <lineage>
        <taxon>Bacteria</taxon>
        <taxon>Bacillati</taxon>
        <taxon>Bacillota</taxon>
        <taxon>Bacilli</taxon>
        <taxon>Lactobacillales</taxon>
        <taxon>Streptococcaceae</taxon>
        <taxon>Streptococcus</taxon>
    </lineage>
</organism>
<name>PUR9_STRPQ</name>
<evidence type="ECO:0000255" key="1">
    <source>
        <dbReference type="HAMAP-Rule" id="MF_00139"/>
    </source>
</evidence>
<evidence type="ECO:0000255" key="2">
    <source>
        <dbReference type="PROSITE-ProRule" id="PRU01202"/>
    </source>
</evidence>
<accession>P0DD61</accession>
<accession>Q8K8Y6</accession>
<gene>
    <name evidence="1" type="primary">purH</name>
    <name type="ordered locus">SPs0025</name>
</gene>
<comment type="catalytic activity">
    <reaction evidence="1">
        <text>(6R)-10-formyltetrahydrofolate + 5-amino-1-(5-phospho-beta-D-ribosyl)imidazole-4-carboxamide = 5-formamido-1-(5-phospho-D-ribosyl)imidazole-4-carboxamide + (6S)-5,6,7,8-tetrahydrofolate</text>
        <dbReference type="Rhea" id="RHEA:22192"/>
        <dbReference type="ChEBI" id="CHEBI:57453"/>
        <dbReference type="ChEBI" id="CHEBI:58467"/>
        <dbReference type="ChEBI" id="CHEBI:58475"/>
        <dbReference type="ChEBI" id="CHEBI:195366"/>
        <dbReference type="EC" id="2.1.2.3"/>
    </reaction>
</comment>
<comment type="catalytic activity">
    <reaction evidence="1">
        <text>IMP + H2O = 5-formamido-1-(5-phospho-D-ribosyl)imidazole-4-carboxamide</text>
        <dbReference type="Rhea" id="RHEA:18445"/>
        <dbReference type="ChEBI" id="CHEBI:15377"/>
        <dbReference type="ChEBI" id="CHEBI:58053"/>
        <dbReference type="ChEBI" id="CHEBI:58467"/>
        <dbReference type="EC" id="3.5.4.10"/>
    </reaction>
</comment>
<comment type="pathway">
    <text evidence="1">Purine metabolism; IMP biosynthesis via de novo pathway; 5-formamido-1-(5-phospho-D-ribosyl)imidazole-4-carboxamide from 5-amino-1-(5-phospho-D-ribosyl)imidazole-4-carboxamide (10-formyl THF route): step 1/1.</text>
</comment>
<comment type="pathway">
    <text evidence="1">Purine metabolism; IMP biosynthesis via de novo pathway; IMP from 5-formamido-1-(5-phospho-D-ribosyl)imidazole-4-carboxamide: step 1/1.</text>
</comment>
<comment type="domain">
    <text evidence="1">The IMP cyclohydrolase activity resides in the N-terminal region.</text>
</comment>
<comment type="similarity">
    <text evidence="1">Belongs to the PurH family.</text>
</comment>
<dbReference type="EC" id="2.1.2.3" evidence="1"/>
<dbReference type="EC" id="3.5.4.10" evidence="1"/>
<dbReference type="EMBL" id="BA000034">
    <property type="protein sequence ID" value="BAC63120.1"/>
    <property type="molecule type" value="Genomic_DNA"/>
</dbReference>
<dbReference type="RefSeq" id="WP_011054093.1">
    <property type="nucleotide sequence ID" value="NC_004606.1"/>
</dbReference>
<dbReference type="SMR" id="P0DD61"/>
<dbReference type="KEGG" id="sps:SPs0025"/>
<dbReference type="HOGENOM" id="CLU_016316_5_2_9"/>
<dbReference type="UniPathway" id="UPA00074">
    <property type="reaction ID" value="UER00133"/>
</dbReference>
<dbReference type="UniPathway" id="UPA00074">
    <property type="reaction ID" value="UER00135"/>
</dbReference>
<dbReference type="GO" id="GO:0005829">
    <property type="term" value="C:cytosol"/>
    <property type="evidence" value="ECO:0007669"/>
    <property type="project" value="TreeGrafter"/>
</dbReference>
<dbReference type="GO" id="GO:0003937">
    <property type="term" value="F:IMP cyclohydrolase activity"/>
    <property type="evidence" value="ECO:0007669"/>
    <property type="project" value="UniProtKB-UniRule"/>
</dbReference>
<dbReference type="GO" id="GO:0004643">
    <property type="term" value="F:phosphoribosylaminoimidazolecarboxamide formyltransferase activity"/>
    <property type="evidence" value="ECO:0007669"/>
    <property type="project" value="UniProtKB-UniRule"/>
</dbReference>
<dbReference type="GO" id="GO:0006189">
    <property type="term" value="P:'de novo' IMP biosynthetic process"/>
    <property type="evidence" value="ECO:0007669"/>
    <property type="project" value="UniProtKB-UniRule"/>
</dbReference>
<dbReference type="CDD" id="cd01421">
    <property type="entry name" value="IMPCH"/>
    <property type="match status" value="1"/>
</dbReference>
<dbReference type="FunFam" id="3.40.140.20:FF:000001">
    <property type="entry name" value="Bifunctional purine biosynthesis protein PurH"/>
    <property type="match status" value="1"/>
</dbReference>
<dbReference type="FunFam" id="3.40.140.20:FF:000002">
    <property type="entry name" value="Bifunctional purine biosynthesis protein PurH"/>
    <property type="match status" value="1"/>
</dbReference>
<dbReference type="FunFam" id="3.40.50.1380:FF:000001">
    <property type="entry name" value="Bifunctional purine biosynthesis protein PurH"/>
    <property type="match status" value="1"/>
</dbReference>
<dbReference type="Gene3D" id="3.40.140.20">
    <property type="match status" value="2"/>
</dbReference>
<dbReference type="Gene3D" id="3.40.50.1380">
    <property type="entry name" value="Methylglyoxal synthase-like domain"/>
    <property type="match status" value="1"/>
</dbReference>
<dbReference type="HAMAP" id="MF_00139">
    <property type="entry name" value="PurH"/>
    <property type="match status" value="1"/>
</dbReference>
<dbReference type="InterPro" id="IPR024051">
    <property type="entry name" value="AICAR_Tfase_dup_dom_sf"/>
</dbReference>
<dbReference type="InterPro" id="IPR016193">
    <property type="entry name" value="Cytidine_deaminase-like"/>
</dbReference>
<dbReference type="InterPro" id="IPR011607">
    <property type="entry name" value="MGS-like_dom"/>
</dbReference>
<dbReference type="InterPro" id="IPR036914">
    <property type="entry name" value="MGS-like_dom_sf"/>
</dbReference>
<dbReference type="InterPro" id="IPR002695">
    <property type="entry name" value="PurH-like"/>
</dbReference>
<dbReference type="NCBIfam" id="NF002049">
    <property type="entry name" value="PRK00881.1"/>
    <property type="match status" value="1"/>
</dbReference>
<dbReference type="NCBIfam" id="TIGR00355">
    <property type="entry name" value="purH"/>
    <property type="match status" value="1"/>
</dbReference>
<dbReference type="PANTHER" id="PTHR11692:SF0">
    <property type="entry name" value="BIFUNCTIONAL PURINE BIOSYNTHESIS PROTEIN ATIC"/>
    <property type="match status" value="1"/>
</dbReference>
<dbReference type="PANTHER" id="PTHR11692">
    <property type="entry name" value="BIFUNCTIONAL PURINE BIOSYNTHESIS PROTEIN PURH"/>
    <property type="match status" value="1"/>
</dbReference>
<dbReference type="Pfam" id="PF01808">
    <property type="entry name" value="AICARFT_IMPCHas"/>
    <property type="match status" value="1"/>
</dbReference>
<dbReference type="Pfam" id="PF02142">
    <property type="entry name" value="MGS"/>
    <property type="match status" value="1"/>
</dbReference>
<dbReference type="PIRSF" id="PIRSF000414">
    <property type="entry name" value="AICARFT_IMPCHas"/>
    <property type="match status" value="1"/>
</dbReference>
<dbReference type="SMART" id="SM00798">
    <property type="entry name" value="AICARFT_IMPCHas"/>
    <property type="match status" value="1"/>
</dbReference>
<dbReference type="SMART" id="SM00851">
    <property type="entry name" value="MGS"/>
    <property type="match status" value="1"/>
</dbReference>
<dbReference type="SUPFAM" id="SSF53927">
    <property type="entry name" value="Cytidine deaminase-like"/>
    <property type="match status" value="1"/>
</dbReference>
<dbReference type="SUPFAM" id="SSF52335">
    <property type="entry name" value="Methylglyoxal synthase-like"/>
    <property type="match status" value="1"/>
</dbReference>
<dbReference type="PROSITE" id="PS51855">
    <property type="entry name" value="MGS"/>
    <property type="match status" value="1"/>
</dbReference>
<keyword id="KW-0378">Hydrolase</keyword>
<keyword id="KW-0511">Multifunctional enzyme</keyword>
<keyword id="KW-0658">Purine biosynthesis</keyword>
<keyword id="KW-0808">Transferase</keyword>
<proteinExistence type="inferred from homology"/>
<reference key="1">
    <citation type="journal article" date="2003" name="Genome Res.">
        <title>Genome sequence of an M3 strain of Streptococcus pyogenes reveals a large-scale genomic rearrangement in invasive strains and new insights into phage evolution.</title>
        <authorList>
            <person name="Nakagawa I."/>
            <person name="Kurokawa K."/>
            <person name="Yamashita A."/>
            <person name="Nakata M."/>
            <person name="Tomiyasu Y."/>
            <person name="Okahashi N."/>
            <person name="Kawabata S."/>
            <person name="Yamazaki K."/>
            <person name="Shiba T."/>
            <person name="Yasunaga T."/>
            <person name="Hayashi H."/>
            <person name="Hattori M."/>
            <person name="Hamada S."/>
        </authorList>
    </citation>
    <scope>NUCLEOTIDE SEQUENCE [LARGE SCALE GENOMIC DNA]</scope>
    <source>
        <strain>SSI-1</strain>
    </source>
</reference>
<sequence>MTKRALISVSDKSGIVDFAKELKNLGWDIISTGGTKVALDNAGVETIAIDDVTGFPEMMDGRVKTLHPNIHGGLLARRDADSHLQAAKDNNIELIDLVVVNLYPFKETILRPDITYDLAVENIDIGGPSMLRSAAKNHASVTVVVDPADYATVLGELADAGQTTFETRQRLAAKVFRHTAAYDALIAEYFTTQVGEAKPEKLTITYDLKQAMRYGENPQQDADFYQKALPIDYSIASAKQLNGKELSFNNIRDADAAIRIIRDFKDRPTVVVLKHMNPCGIGQADDIETAWDYAYEADPVSIFGGIVVLNREVDAATAKKMHPIFLEIIIAPSYSEEALAILTNKKKNLRILELPFDAQAASEVEAEYTGVVGGLLVQNQDVVAENPSDWQVVTDRQPTEQEATALEFAWKAIKYVKSNGIIITNDHMTLGLGAGQTNRVGSVKIAIEQAKDHLDGAVLASDAFFPFADNIEEIAAAGIKAIIQPGGSVRDQDSIDAANKHGLTMIFTGVRHFRH</sequence>
<protein>
    <recommendedName>
        <fullName evidence="1">Bifunctional purine biosynthesis protein PurH</fullName>
    </recommendedName>
    <domain>
        <recommendedName>
            <fullName evidence="1">Phosphoribosylaminoimidazolecarboxamide formyltransferase</fullName>
            <ecNumber evidence="1">2.1.2.3</ecNumber>
        </recommendedName>
        <alternativeName>
            <fullName evidence="1">AICAR transformylase</fullName>
        </alternativeName>
    </domain>
    <domain>
        <recommendedName>
            <fullName evidence="1">IMP cyclohydrolase</fullName>
            <ecNumber evidence="1">3.5.4.10</ecNumber>
        </recommendedName>
        <alternativeName>
            <fullName evidence="1">ATIC</fullName>
        </alternativeName>
        <alternativeName>
            <fullName evidence="1">IMP synthase</fullName>
        </alternativeName>
        <alternativeName>
            <fullName evidence="1">Inosinicase</fullName>
        </alternativeName>
    </domain>
</protein>
<feature type="chain" id="PRO_0000411470" description="Bifunctional purine biosynthesis protein PurH">
    <location>
        <begin position="1"/>
        <end position="515"/>
    </location>
</feature>
<feature type="domain" description="MGS-like" evidence="2">
    <location>
        <begin position="1"/>
        <end position="145"/>
    </location>
</feature>